<sequence length="502" mass="54643">MSIRAEEISALIKQQIENYQSEIEVSDVGTVIQVGDGIARAHGLDNVMAGELVEFSNGVMGLAQNLEENNVGIIILGPYTEIREGDEVRRTGRIMQVPVGKELIGRVVNPLGQPVDGLGPINTTNTRPIESPAPGVMDRKSVHEPLQTGIKAIDALVPIGRGQRELIIGDRQTGKTAVALDTIINQKDEDMICIYVAIGQKESTVRNVVETLRKHGALEYTIVVTASASQPAPLLYLAPYAGVTMGEEFMYNGKHVLVVYDDLSKQAAAYRELSLLLRRPPGREAYPGDVFYLHSRLLERAAKLSDAKGGGSLTALPFIETQAGDVSAYIPTNVISITDGQIFLQSDLFFSGVRPAIDAGTSVSRVGGSAQIKAMSKVSGTLRLDLASYRELEAFAQFGSDLDKATQAKLNRGARTVEVLKQGLHKPLRVEKQVIILYALTRGFLDDIPVVDITRFEEEFHAWLDSNATDLLEEIRTTKKLADDDKFAAAINGFKKVFVASE</sequence>
<organism>
    <name type="scientific">Bacillus anthracis (strain CDC 684 / NRRL 3495)</name>
    <dbReference type="NCBI Taxonomy" id="568206"/>
    <lineage>
        <taxon>Bacteria</taxon>
        <taxon>Bacillati</taxon>
        <taxon>Bacillota</taxon>
        <taxon>Bacilli</taxon>
        <taxon>Bacillales</taxon>
        <taxon>Bacillaceae</taxon>
        <taxon>Bacillus</taxon>
        <taxon>Bacillus cereus group</taxon>
    </lineage>
</organism>
<comment type="function">
    <text evidence="1">Produces ATP from ADP in the presence of a proton gradient across the membrane. The alpha chain is a regulatory subunit.</text>
</comment>
<comment type="catalytic activity">
    <reaction evidence="1">
        <text>ATP + H2O + 4 H(+)(in) = ADP + phosphate + 5 H(+)(out)</text>
        <dbReference type="Rhea" id="RHEA:57720"/>
        <dbReference type="ChEBI" id="CHEBI:15377"/>
        <dbReference type="ChEBI" id="CHEBI:15378"/>
        <dbReference type="ChEBI" id="CHEBI:30616"/>
        <dbReference type="ChEBI" id="CHEBI:43474"/>
        <dbReference type="ChEBI" id="CHEBI:456216"/>
        <dbReference type="EC" id="7.1.2.2"/>
    </reaction>
</comment>
<comment type="subunit">
    <text evidence="1">F-type ATPases have 2 components, CF(1) - the catalytic core - and CF(0) - the membrane proton channel. CF(1) has five subunits: alpha(3), beta(3), gamma(1), delta(1), epsilon(1). CF(0) has three main subunits: a(1), b(2) and c(9-12). The alpha and beta chains form an alternating ring which encloses part of the gamma chain. CF(1) is attached to CF(0) by a central stalk formed by the gamma and epsilon chains, while a peripheral stalk is formed by the delta and b chains.</text>
</comment>
<comment type="subcellular location">
    <subcellularLocation>
        <location evidence="1">Cell membrane</location>
        <topology evidence="1">Peripheral membrane protein</topology>
    </subcellularLocation>
</comment>
<comment type="similarity">
    <text evidence="1">Belongs to the ATPase alpha/beta chains family.</text>
</comment>
<reference key="1">
    <citation type="submission" date="2008-10" db="EMBL/GenBank/DDBJ databases">
        <title>Genome sequence of Bacillus anthracis str. CDC 684.</title>
        <authorList>
            <person name="Dodson R.J."/>
            <person name="Munk A.C."/>
            <person name="Brettin T."/>
            <person name="Bruce D."/>
            <person name="Detter C."/>
            <person name="Tapia R."/>
            <person name="Han C."/>
            <person name="Sutton G."/>
            <person name="Sims D."/>
        </authorList>
    </citation>
    <scope>NUCLEOTIDE SEQUENCE [LARGE SCALE GENOMIC DNA]</scope>
    <source>
        <strain>CDC 684 / NRRL 3495</strain>
    </source>
</reference>
<accession>C3LFI1</accession>
<evidence type="ECO:0000255" key="1">
    <source>
        <dbReference type="HAMAP-Rule" id="MF_01346"/>
    </source>
</evidence>
<evidence type="ECO:0000256" key="2">
    <source>
        <dbReference type="SAM" id="MobiDB-lite"/>
    </source>
</evidence>
<dbReference type="EC" id="7.1.2.2" evidence="1"/>
<dbReference type="EMBL" id="CP001215">
    <property type="protein sequence ID" value="ACP14502.1"/>
    <property type="molecule type" value="Genomic_DNA"/>
</dbReference>
<dbReference type="RefSeq" id="WP_000027518.1">
    <property type="nucleotide sequence ID" value="NC_012581.1"/>
</dbReference>
<dbReference type="SMR" id="C3LFI1"/>
<dbReference type="GeneID" id="93005816"/>
<dbReference type="KEGG" id="bah:BAMEG_5596"/>
<dbReference type="HOGENOM" id="CLU_010091_2_1_9"/>
<dbReference type="GO" id="GO:0005886">
    <property type="term" value="C:plasma membrane"/>
    <property type="evidence" value="ECO:0007669"/>
    <property type="project" value="UniProtKB-SubCell"/>
</dbReference>
<dbReference type="GO" id="GO:0045259">
    <property type="term" value="C:proton-transporting ATP synthase complex"/>
    <property type="evidence" value="ECO:0007669"/>
    <property type="project" value="UniProtKB-KW"/>
</dbReference>
<dbReference type="GO" id="GO:0043531">
    <property type="term" value="F:ADP binding"/>
    <property type="evidence" value="ECO:0007669"/>
    <property type="project" value="TreeGrafter"/>
</dbReference>
<dbReference type="GO" id="GO:0005524">
    <property type="term" value="F:ATP binding"/>
    <property type="evidence" value="ECO:0007669"/>
    <property type="project" value="UniProtKB-UniRule"/>
</dbReference>
<dbReference type="GO" id="GO:0046933">
    <property type="term" value="F:proton-transporting ATP synthase activity, rotational mechanism"/>
    <property type="evidence" value="ECO:0007669"/>
    <property type="project" value="UniProtKB-UniRule"/>
</dbReference>
<dbReference type="CDD" id="cd18113">
    <property type="entry name" value="ATP-synt_F1_alpha_C"/>
    <property type="match status" value="1"/>
</dbReference>
<dbReference type="CDD" id="cd18116">
    <property type="entry name" value="ATP-synt_F1_alpha_N"/>
    <property type="match status" value="1"/>
</dbReference>
<dbReference type="CDD" id="cd01132">
    <property type="entry name" value="F1-ATPase_alpha_CD"/>
    <property type="match status" value="1"/>
</dbReference>
<dbReference type="FunFam" id="1.20.150.20:FF:000001">
    <property type="entry name" value="ATP synthase subunit alpha"/>
    <property type="match status" value="1"/>
</dbReference>
<dbReference type="FunFam" id="2.40.30.20:FF:000001">
    <property type="entry name" value="ATP synthase subunit alpha"/>
    <property type="match status" value="1"/>
</dbReference>
<dbReference type="FunFam" id="3.40.50.300:FF:000002">
    <property type="entry name" value="ATP synthase subunit alpha"/>
    <property type="match status" value="1"/>
</dbReference>
<dbReference type="Gene3D" id="2.40.30.20">
    <property type="match status" value="1"/>
</dbReference>
<dbReference type="Gene3D" id="1.20.150.20">
    <property type="entry name" value="ATP synthase alpha/beta chain, C-terminal domain"/>
    <property type="match status" value="1"/>
</dbReference>
<dbReference type="Gene3D" id="3.40.50.300">
    <property type="entry name" value="P-loop containing nucleotide triphosphate hydrolases"/>
    <property type="match status" value="1"/>
</dbReference>
<dbReference type="HAMAP" id="MF_01346">
    <property type="entry name" value="ATP_synth_alpha_bact"/>
    <property type="match status" value="1"/>
</dbReference>
<dbReference type="InterPro" id="IPR023366">
    <property type="entry name" value="ATP_synth_asu-like_sf"/>
</dbReference>
<dbReference type="InterPro" id="IPR000793">
    <property type="entry name" value="ATP_synth_asu_C"/>
</dbReference>
<dbReference type="InterPro" id="IPR038376">
    <property type="entry name" value="ATP_synth_asu_C_sf"/>
</dbReference>
<dbReference type="InterPro" id="IPR033732">
    <property type="entry name" value="ATP_synth_F1_a_nt-bd_dom"/>
</dbReference>
<dbReference type="InterPro" id="IPR005294">
    <property type="entry name" value="ATP_synth_F1_asu"/>
</dbReference>
<dbReference type="InterPro" id="IPR020003">
    <property type="entry name" value="ATPase_a/bsu_AS"/>
</dbReference>
<dbReference type="InterPro" id="IPR004100">
    <property type="entry name" value="ATPase_F1/V1/A1_a/bsu_N"/>
</dbReference>
<dbReference type="InterPro" id="IPR036121">
    <property type="entry name" value="ATPase_F1/V1/A1_a/bsu_N_sf"/>
</dbReference>
<dbReference type="InterPro" id="IPR000194">
    <property type="entry name" value="ATPase_F1/V1/A1_a/bsu_nucl-bd"/>
</dbReference>
<dbReference type="InterPro" id="IPR027417">
    <property type="entry name" value="P-loop_NTPase"/>
</dbReference>
<dbReference type="NCBIfam" id="TIGR00962">
    <property type="entry name" value="atpA"/>
    <property type="match status" value="1"/>
</dbReference>
<dbReference type="NCBIfam" id="NF009884">
    <property type="entry name" value="PRK13343.1"/>
    <property type="match status" value="1"/>
</dbReference>
<dbReference type="PANTHER" id="PTHR48082">
    <property type="entry name" value="ATP SYNTHASE SUBUNIT ALPHA, MITOCHONDRIAL"/>
    <property type="match status" value="1"/>
</dbReference>
<dbReference type="PANTHER" id="PTHR48082:SF2">
    <property type="entry name" value="ATP SYNTHASE SUBUNIT ALPHA, MITOCHONDRIAL"/>
    <property type="match status" value="1"/>
</dbReference>
<dbReference type="Pfam" id="PF00006">
    <property type="entry name" value="ATP-synt_ab"/>
    <property type="match status" value="1"/>
</dbReference>
<dbReference type="Pfam" id="PF00306">
    <property type="entry name" value="ATP-synt_ab_C"/>
    <property type="match status" value="1"/>
</dbReference>
<dbReference type="Pfam" id="PF02874">
    <property type="entry name" value="ATP-synt_ab_N"/>
    <property type="match status" value="1"/>
</dbReference>
<dbReference type="PIRSF" id="PIRSF039088">
    <property type="entry name" value="F_ATPase_subunit_alpha"/>
    <property type="match status" value="1"/>
</dbReference>
<dbReference type="SUPFAM" id="SSF47917">
    <property type="entry name" value="C-terminal domain of alpha and beta subunits of F1 ATP synthase"/>
    <property type="match status" value="1"/>
</dbReference>
<dbReference type="SUPFAM" id="SSF50615">
    <property type="entry name" value="N-terminal domain of alpha and beta subunits of F1 ATP synthase"/>
    <property type="match status" value="1"/>
</dbReference>
<dbReference type="SUPFAM" id="SSF52540">
    <property type="entry name" value="P-loop containing nucleoside triphosphate hydrolases"/>
    <property type="match status" value="1"/>
</dbReference>
<dbReference type="PROSITE" id="PS00152">
    <property type="entry name" value="ATPASE_ALPHA_BETA"/>
    <property type="match status" value="1"/>
</dbReference>
<feature type="chain" id="PRO_1000166517" description="ATP synthase subunit alpha">
    <location>
        <begin position="1"/>
        <end position="502"/>
    </location>
</feature>
<feature type="region of interest" description="Disordered" evidence="2">
    <location>
        <begin position="115"/>
        <end position="135"/>
    </location>
</feature>
<feature type="binding site" evidence="1">
    <location>
        <begin position="169"/>
        <end position="176"/>
    </location>
    <ligand>
        <name>ATP</name>
        <dbReference type="ChEBI" id="CHEBI:30616"/>
    </ligand>
</feature>
<feature type="site" description="Required for activity" evidence="1">
    <location>
        <position position="362"/>
    </location>
</feature>
<proteinExistence type="inferred from homology"/>
<protein>
    <recommendedName>
        <fullName evidence="1">ATP synthase subunit alpha</fullName>
        <ecNumber evidence="1">7.1.2.2</ecNumber>
    </recommendedName>
    <alternativeName>
        <fullName evidence="1">ATP synthase F1 sector subunit alpha</fullName>
    </alternativeName>
    <alternativeName>
        <fullName evidence="1">F-ATPase subunit alpha</fullName>
    </alternativeName>
</protein>
<keyword id="KW-0066">ATP synthesis</keyword>
<keyword id="KW-0067">ATP-binding</keyword>
<keyword id="KW-1003">Cell membrane</keyword>
<keyword id="KW-0139">CF(1)</keyword>
<keyword id="KW-0375">Hydrogen ion transport</keyword>
<keyword id="KW-0406">Ion transport</keyword>
<keyword id="KW-0472">Membrane</keyword>
<keyword id="KW-0547">Nucleotide-binding</keyword>
<keyword id="KW-1278">Translocase</keyword>
<keyword id="KW-0813">Transport</keyword>
<name>ATPA_BACAC</name>
<gene>
    <name evidence="1" type="primary">atpA</name>
    <name type="ordered locus">BAMEG_5596</name>
</gene>